<name>A333_LOXLA</name>
<evidence type="ECO:0000250" key="1">
    <source>
        <dbReference type="UniProtKB" id="A0A0D4WTV1"/>
    </source>
</evidence>
<evidence type="ECO:0000250" key="2">
    <source>
        <dbReference type="UniProtKB" id="A0A0D4WV12"/>
    </source>
</evidence>
<evidence type="ECO:0000250" key="3">
    <source>
        <dbReference type="UniProtKB" id="P0CE80"/>
    </source>
</evidence>
<evidence type="ECO:0000250" key="4">
    <source>
        <dbReference type="UniProtKB" id="Q4ZFU2"/>
    </source>
</evidence>
<evidence type="ECO:0000250" key="5">
    <source>
        <dbReference type="UniProtKB" id="Q8I914"/>
    </source>
</evidence>
<evidence type="ECO:0000303" key="6">
    <source>
    </source>
</evidence>
<evidence type="ECO:0000305" key="7"/>
<evidence type="ECO:0000305" key="8">
    <source>
    </source>
</evidence>
<feature type="chain" id="PRO_0000392828" description="Dermonecrotic toxin LlSicTox-alphaIII3iii">
    <location>
        <begin position="1" status="less than"/>
        <end position="278"/>
    </location>
</feature>
<feature type="active site" evidence="5">
    <location>
        <position position="5"/>
    </location>
</feature>
<feature type="active site" description="Nucleophile" evidence="5">
    <location>
        <position position="40"/>
    </location>
</feature>
<feature type="binding site" evidence="5">
    <location>
        <position position="25"/>
    </location>
    <ligand>
        <name>Mg(2+)</name>
        <dbReference type="ChEBI" id="CHEBI:18420"/>
    </ligand>
</feature>
<feature type="binding site" evidence="5">
    <location>
        <position position="27"/>
    </location>
    <ligand>
        <name>Mg(2+)</name>
        <dbReference type="ChEBI" id="CHEBI:18420"/>
    </ligand>
</feature>
<feature type="binding site" evidence="5">
    <location>
        <position position="84"/>
    </location>
    <ligand>
        <name>Mg(2+)</name>
        <dbReference type="ChEBI" id="CHEBI:18420"/>
    </ligand>
</feature>
<feature type="disulfide bond" evidence="5">
    <location>
        <begin position="44"/>
        <end position="50"/>
    </location>
</feature>
<feature type="non-terminal residue">
    <location>
        <position position="1"/>
    </location>
</feature>
<sequence length="278" mass="31680">WIMGHMVNAVKQIPTFLNDGANAIEADITFKGAVPTYSYHGTPCDFGRVCIRWEYFDVFLQTLRDYTTPGNSKYYEKFILFVLDLKTGSLNNNEVRKAGENVAKGLLKNYWNNGNNGGRAYVVLSLPDIAHYEFIRTFKEVLKAEGHENLLDKVGYDLSGPYLPSLPSLDSVHEAFKKAGVDGHVWLSDGLTNWAPLGDMARLKEIVKRRDSENGFISKVYYWFVDKYSTTRTALDVGVDGIMTNFPYVIIDVLNESGYKDKYRLATYDDNPWETFKK</sequence>
<accession>C0JB13</accession>
<reference key="1">
    <citation type="journal article" date="2009" name="Mol. Biol. Evol.">
        <title>Molecular evolution, functional variation, and proposed nomenclature of the gene family that includes sphingomyelinase D in sicariid spider venoms.</title>
        <authorList>
            <person name="Binford G.J."/>
            <person name="Bodner M.R."/>
            <person name="Cordes M.H."/>
            <person name="Baldwin K.L."/>
            <person name="Rynerson M.R."/>
            <person name="Burns S.N."/>
            <person name="Zobel-Thropp P.A."/>
        </authorList>
    </citation>
    <scope>NUCLEOTIDE SEQUENCE [MRNA]</scope>
    <scope>NOMENCLATURE</scope>
    <source>
        <tissue>Venom gland</tissue>
    </source>
</reference>
<dbReference type="EC" id="4.6.1.-" evidence="4"/>
<dbReference type="EMBL" id="FJ171448">
    <property type="protein sequence ID" value="ACN48944.1"/>
    <property type="molecule type" value="mRNA"/>
</dbReference>
<dbReference type="SMR" id="C0JB13"/>
<dbReference type="GO" id="GO:0005576">
    <property type="term" value="C:extracellular region"/>
    <property type="evidence" value="ECO:0007669"/>
    <property type="project" value="UniProtKB-SubCell"/>
</dbReference>
<dbReference type="GO" id="GO:0016829">
    <property type="term" value="F:lyase activity"/>
    <property type="evidence" value="ECO:0007669"/>
    <property type="project" value="UniProtKB-KW"/>
</dbReference>
<dbReference type="GO" id="GO:0046872">
    <property type="term" value="F:metal ion binding"/>
    <property type="evidence" value="ECO:0007669"/>
    <property type="project" value="UniProtKB-KW"/>
</dbReference>
<dbReference type="GO" id="GO:0008081">
    <property type="term" value="F:phosphoric diester hydrolase activity"/>
    <property type="evidence" value="ECO:0007669"/>
    <property type="project" value="InterPro"/>
</dbReference>
<dbReference type="GO" id="GO:0090729">
    <property type="term" value="F:toxin activity"/>
    <property type="evidence" value="ECO:0007669"/>
    <property type="project" value="UniProtKB-KW"/>
</dbReference>
<dbReference type="GO" id="GO:0031640">
    <property type="term" value="P:killing of cells of another organism"/>
    <property type="evidence" value="ECO:0007669"/>
    <property type="project" value="UniProtKB-KW"/>
</dbReference>
<dbReference type="GO" id="GO:0016042">
    <property type="term" value="P:lipid catabolic process"/>
    <property type="evidence" value="ECO:0007669"/>
    <property type="project" value="UniProtKB-KW"/>
</dbReference>
<dbReference type="CDD" id="cd08576">
    <property type="entry name" value="GDPD_like_SMaseD_PLD"/>
    <property type="match status" value="1"/>
</dbReference>
<dbReference type="Gene3D" id="3.20.20.190">
    <property type="entry name" value="Phosphatidylinositol (PI) phosphodiesterase"/>
    <property type="match status" value="1"/>
</dbReference>
<dbReference type="InterPro" id="IPR017946">
    <property type="entry name" value="PLC-like_Pdiesterase_TIM-brl"/>
</dbReference>
<dbReference type="SUPFAM" id="SSF51695">
    <property type="entry name" value="PLC-like phosphodiesterases"/>
    <property type="match status" value="1"/>
</dbReference>
<comment type="function">
    <text evidence="1 3">Dermonecrotic toxins cleave the phosphodiester linkage between the phosphate and headgroup of certain phospholipids (sphingolipid and lysolipid substrates), forming an alcohol (often choline) and a cyclic phosphate (By similarity). This toxin acts on sphingomyelin (SM) (By similarity). It may also act on ceramide phosphoethanolamine (CPE), lysophosphatidylcholine (LPC) and lysophosphatidylethanolamine (LPE), but not on lysophosphatidylserine (LPS), and lysophosphatidylglycerol (LPG) (By similarity). It acts by transphosphatidylation, releasing exclusively cyclic phosphate products as second products (By similarity). Induces dermonecrosis, hemolysis, increased vascular permeability, edema, inflammatory response, and platelet aggregation (By similarity).</text>
</comment>
<comment type="catalytic activity">
    <reaction evidence="1">
        <text>an N-(acyl)-sphingosylphosphocholine = an N-(acyl)-sphingosyl-1,3-cyclic phosphate + choline</text>
        <dbReference type="Rhea" id="RHEA:60652"/>
        <dbReference type="ChEBI" id="CHEBI:15354"/>
        <dbReference type="ChEBI" id="CHEBI:64583"/>
        <dbReference type="ChEBI" id="CHEBI:143892"/>
    </reaction>
</comment>
<comment type="catalytic activity">
    <reaction evidence="1">
        <text>an N-(acyl)-sphingosylphosphoethanolamine = an N-(acyl)-sphingosyl-1,3-cyclic phosphate + ethanolamine</text>
        <dbReference type="Rhea" id="RHEA:60648"/>
        <dbReference type="ChEBI" id="CHEBI:57603"/>
        <dbReference type="ChEBI" id="CHEBI:143891"/>
        <dbReference type="ChEBI" id="CHEBI:143892"/>
    </reaction>
</comment>
<comment type="catalytic activity">
    <reaction evidence="1">
        <text>a 1-acyl-sn-glycero-3-phosphocholine = a 1-acyl-sn-glycero-2,3-cyclic phosphate + choline</text>
        <dbReference type="Rhea" id="RHEA:60700"/>
        <dbReference type="ChEBI" id="CHEBI:15354"/>
        <dbReference type="ChEBI" id="CHEBI:58168"/>
        <dbReference type="ChEBI" id="CHEBI:143947"/>
    </reaction>
</comment>
<comment type="catalytic activity">
    <reaction evidence="1">
        <text>a 1-acyl-sn-glycero-3-phosphoethanolamine = a 1-acyl-sn-glycero-2,3-cyclic phosphate + ethanolamine</text>
        <dbReference type="Rhea" id="RHEA:60704"/>
        <dbReference type="ChEBI" id="CHEBI:57603"/>
        <dbReference type="ChEBI" id="CHEBI:64381"/>
        <dbReference type="ChEBI" id="CHEBI:143947"/>
    </reaction>
</comment>
<comment type="cofactor">
    <cofactor evidence="5">
        <name>Mg(2+)</name>
        <dbReference type="ChEBI" id="CHEBI:18420"/>
    </cofactor>
    <text evidence="5">Binds 1 Mg(2+) ion per subunit.</text>
</comment>
<comment type="subcellular location">
    <subcellularLocation>
        <location evidence="8">Secreted</location>
    </subcellularLocation>
</comment>
<comment type="tissue specificity">
    <text evidence="8">Expressed by the venom gland.</text>
</comment>
<comment type="similarity">
    <text evidence="7">Belongs to the arthropod phospholipase D family. Class I subfamily.</text>
</comment>
<comment type="caution">
    <text evidence="1 2 4">The most common activity assay for dermonecrotic toxins detects enzymatic activity by monitoring choline release from substrate. Liberation of choline from sphingomyelin (SM) or lysophosphatidylcholine (LPC) is commonly assumed to result from substrate hydrolysis, giving either ceramide-1-phosphate (C1P) or lysophosphatidic acid (LPA), respectively, as a second product. However, two studies from Lajoie and colleagues (2013 and 2015) report the observation of exclusive formation of cyclic phosphate products as second products, resulting from intramolecular transphosphatidylation. Cyclic phosphates have vastly different biological properties from their monoester counterparts, and they may be relevant to the pathology of brown spider envenomation.</text>
</comment>
<proteinExistence type="evidence at transcript level"/>
<organism>
    <name type="scientific">Loxosceles laeta</name>
    <name type="common">South American recluse spider</name>
    <name type="synonym">Scytodes laeta</name>
    <dbReference type="NCBI Taxonomy" id="58217"/>
    <lineage>
        <taxon>Eukaryota</taxon>
        <taxon>Metazoa</taxon>
        <taxon>Ecdysozoa</taxon>
        <taxon>Arthropoda</taxon>
        <taxon>Chelicerata</taxon>
        <taxon>Arachnida</taxon>
        <taxon>Araneae</taxon>
        <taxon>Araneomorphae</taxon>
        <taxon>Haplogynae</taxon>
        <taxon>Scytodoidea</taxon>
        <taxon>Sicariidae</taxon>
        <taxon>Loxosceles</taxon>
    </lineage>
</organism>
<protein>
    <recommendedName>
        <fullName evidence="6">Dermonecrotic toxin LlSicTox-alphaIII3iii</fullName>
        <ecNumber evidence="4">4.6.1.-</ecNumber>
    </recommendedName>
    <alternativeName>
        <fullName>Phospholipase D</fullName>
        <shortName>PLD</shortName>
    </alternativeName>
    <alternativeName>
        <fullName>Sphingomyelin phosphodiesterase D</fullName>
        <shortName>SMD</shortName>
        <shortName>SMase D</shortName>
        <shortName>Sphingomyelinase D</shortName>
    </alternativeName>
</protein>
<keyword id="KW-0204">Cytolysis</keyword>
<keyword id="KW-1061">Dermonecrotic toxin</keyword>
<keyword id="KW-1015">Disulfide bond</keyword>
<keyword id="KW-0354">Hemolysis</keyword>
<keyword id="KW-0442">Lipid degradation</keyword>
<keyword id="KW-0443">Lipid metabolism</keyword>
<keyword id="KW-0456">Lyase</keyword>
<keyword id="KW-0460">Magnesium</keyword>
<keyword id="KW-0479">Metal-binding</keyword>
<keyword id="KW-0964">Secreted</keyword>
<keyword id="KW-0800">Toxin</keyword>